<organism>
    <name type="scientific">Radianthus crispa</name>
    <name type="common">Leathery sea anemone</name>
    <name type="synonym">Heteractis crispa</name>
    <dbReference type="NCBI Taxonomy" id="3122430"/>
    <lineage>
        <taxon>Eukaryota</taxon>
        <taxon>Metazoa</taxon>
        <taxon>Cnidaria</taxon>
        <taxon>Anthozoa</taxon>
        <taxon>Hexacorallia</taxon>
        <taxon>Actiniaria</taxon>
        <taxon>Stichodactylidae</taxon>
        <taxon>Radianthus</taxon>
    </lineage>
</organism>
<name>BDSB3_RADCR</name>
<keyword id="KW-0903">Direct protein sequencing</keyword>
<keyword id="KW-1015">Disulfide bond</keyword>
<keyword id="KW-0872">Ion channel impairing toxin</keyword>
<keyword id="KW-0166">Nematocyst</keyword>
<keyword id="KW-1275">Proton-gated sodium channel impairing toxin</keyword>
<keyword id="KW-0964">Secreted</keyword>
<keyword id="KW-0800">Toxin</keyword>
<accession>C0HL53</accession>
<proteinExistence type="evidence at protein level"/>
<protein>
    <recommendedName>
        <fullName evidence="4">Pi-stichotoxin-Hcr5c</fullName>
        <shortName evidence="7">Pi-SHTX-Hcr5c</shortName>
    </recommendedName>
    <alternativeName>
        <fullName evidence="5">APETx-like peptide</fullName>
    </alternativeName>
    <alternativeName>
        <fullName evidence="4">Pi-AnmTX Hcr 1b-3</fullName>
        <shortName evidence="5">Hcr 1b-3</shortName>
    </alternativeName>
</protein>
<comment type="function">
    <text evidence="2 3">Weakly and reversibly inhibits rat homomeric ASIC1 (isoform ASIC1a) (IC(50)=4.95 uM), and ASIC3 (IC(50)=17 uM) (PubMed:29684594, PubMed:32326130). ASIC1a current inhibition and ASIC3 transient current inhibition are not complete, and reach a maximum of 70% inhibition and 80%, respectively (PubMed:32326130).</text>
</comment>
<comment type="subcellular location">
    <subcellularLocation>
        <location evidence="6">Secreted</location>
    </subcellularLocation>
    <subcellularLocation>
        <location evidence="6">Nematocyst</location>
    </subcellularLocation>
</comment>
<comment type="mass spectrometry"/>
<comment type="miscellaneous">
    <text evidence="6">A synonymy between H.magnifica and R.crispa is controversial.</text>
</comment>
<comment type="similarity">
    <text evidence="6">Belongs to the sea anemone type 3 (BDS) potassium channel toxin family.</text>
</comment>
<evidence type="ECO:0000250" key="1">
    <source>
        <dbReference type="UniProtKB" id="P61541"/>
    </source>
</evidence>
<evidence type="ECO:0000269" key="2">
    <source>
    </source>
</evidence>
<evidence type="ECO:0000269" key="3">
    <source>
    </source>
</evidence>
<evidence type="ECO:0000303" key="4">
    <source>
    </source>
</evidence>
<evidence type="ECO:0000303" key="5">
    <source>
    </source>
</evidence>
<evidence type="ECO:0000305" key="6"/>
<evidence type="ECO:0000305" key="7">
    <source>
    </source>
</evidence>
<dbReference type="SMR" id="C0HL53"/>
<dbReference type="GO" id="GO:0005576">
    <property type="term" value="C:extracellular region"/>
    <property type="evidence" value="ECO:0007669"/>
    <property type="project" value="UniProtKB-SubCell"/>
</dbReference>
<dbReference type="GO" id="GO:0042151">
    <property type="term" value="C:nematocyst"/>
    <property type="evidence" value="ECO:0007669"/>
    <property type="project" value="UniProtKB-SubCell"/>
</dbReference>
<dbReference type="GO" id="GO:0008200">
    <property type="term" value="F:ion channel inhibitor activity"/>
    <property type="evidence" value="ECO:0007669"/>
    <property type="project" value="InterPro"/>
</dbReference>
<dbReference type="GO" id="GO:0090729">
    <property type="term" value="F:toxin activity"/>
    <property type="evidence" value="ECO:0007669"/>
    <property type="project" value="UniProtKB-KW"/>
</dbReference>
<dbReference type="Gene3D" id="2.20.20.10">
    <property type="entry name" value="Anthopleurin-A"/>
    <property type="match status" value="1"/>
</dbReference>
<dbReference type="InterPro" id="IPR012414">
    <property type="entry name" value="BDS_K_chnl_tox"/>
</dbReference>
<dbReference type="InterPro" id="IPR023355">
    <property type="entry name" value="Myo_ane_neurotoxin_sf"/>
</dbReference>
<dbReference type="Pfam" id="PF07936">
    <property type="entry name" value="Defensin_4"/>
    <property type="match status" value="1"/>
</dbReference>
<dbReference type="SUPFAM" id="SSF57392">
    <property type="entry name" value="Defensin-like"/>
    <property type="match status" value="1"/>
</dbReference>
<sequence>GTPCKCHGYIGVYWFMLAGCPDGYGYNLSCPYFLGICCVKK</sequence>
<reference key="1">
    <citation type="journal article" date="2018" name="Peptides">
        <title>New APETx-like peptides from sea anemone Heteractis crispa modulate ASIC1a channels.</title>
        <authorList>
            <person name="Kalina R."/>
            <person name="Gladkikh I."/>
            <person name="Dmitrenok P."/>
            <person name="Chernikov O."/>
            <person name="Koshelev S."/>
            <person name="Kvetkina A."/>
            <person name="Kozlov S."/>
            <person name="Kozlovskaya E."/>
            <person name="Monastyrnaya M."/>
        </authorList>
    </citation>
    <scope>PROTEIN SEQUENCE</scope>
    <scope>FUNCTION</scope>
    <scope>MASS SPECTROMETRY</scope>
</reference>
<reference key="2">
    <citation type="journal article" date="2020" name="Toxins">
        <title>APETx-Like peptides from the sea anemone Heteractis crispa, diverse in their effect on ASIC1a and ASIC3 ion channels.</title>
        <authorList>
            <person name="Kalina R.S."/>
            <person name="Koshelev S.G."/>
            <person name="Zelepuga E.A."/>
            <person name="Kim N.Y."/>
            <person name="Kozlov S.A."/>
            <person name="Kozlovskaya E.P."/>
            <person name="Monastyrnaya M.M."/>
            <person name="Gladkikh I.N."/>
        </authorList>
    </citation>
    <scope>FUNCTION</scope>
</reference>
<feature type="peptide" id="PRO_0000444938" description="Pi-stichotoxin-Hcr5c" evidence="2">
    <location>
        <begin position="1"/>
        <end position="41"/>
    </location>
</feature>
<feature type="disulfide bond" evidence="1">
    <location>
        <begin position="4"/>
        <end position="37"/>
    </location>
</feature>
<feature type="disulfide bond" evidence="1">
    <location>
        <begin position="6"/>
        <end position="30"/>
    </location>
</feature>
<feature type="disulfide bond" evidence="1">
    <location>
        <begin position="20"/>
        <end position="38"/>
    </location>
</feature>